<sequence>MILYAKVSSVENGYKYDQEAAKALIDDYGILTCFEVEKVYIDRSSSQVKLVKEDRKFNTVNFDFFIETEKGPLEYDIFKNPLGLECIVNTYHHKW</sequence>
<accession>P13324</accession>
<gene>
    <name type="primary">y07B</name>
    <name type="synonym">ipi.-3</name>
    <name type="synonym">trnA.2</name>
</gene>
<organism>
    <name type="scientific">Enterobacteria phage T4</name>
    <name type="common">Bacteriophage T4</name>
    <dbReference type="NCBI Taxonomy" id="10665"/>
    <lineage>
        <taxon>Viruses</taxon>
        <taxon>Duplodnaviria</taxon>
        <taxon>Heunggongvirae</taxon>
        <taxon>Uroviricota</taxon>
        <taxon>Caudoviricetes</taxon>
        <taxon>Straboviridae</taxon>
        <taxon>Tevenvirinae</taxon>
        <taxon>Tequatrovirus</taxon>
    </lineage>
</organism>
<keyword id="KW-1185">Reference proteome</keyword>
<dbReference type="EMBL" id="X03016">
    <property type="protein sequence ID" value="CAA26806.1"/>
    <property type="molecule type" value="Genomic_DNA"/>
</dbReference>
<dbReference type="EMBL" id="AF158101">
    <property type="protein sequence ID" value="AAD42680.1"/>
    <property type="molecule type" value="Genomic_DNA"/>
</dbReference>
<dbReference type="RefSeq" id="NP_049746.1">
    <property type="nucleotide sequence ID" value="NC_000866.4"/>
</dbReference>
<dbReference type="GeneID" id="1258580"/>
<dbReference type="KEGG" id="vg:1258580"/>
<dbReference type="OrthoDB" id="17493at10239"/>
<dbReference type="Proteomes" id="UP000009087">
    <property type="component" value="Segment"/>
</dbReference>
<organismHost>
    <name type="scientific">Escherichia coli</name>
    <dbReference type="NCBI Taxonomy" id="562"/>
</organismHost>
<reference key="1">
    <citation type="journal article" date="1985" name="J. Mol. Biol.">
        <title>Sequence organization and control of transcription in the bacteriophage T4 tRNA region.</title>
        <authorList>
            <person name="Broida J."/>
            <person name="Abelson J."/>
        </authorList>
    </citation>
    <scope>NUCLEOTIDE SEQUENCE [GENOMIC DNA]</scope>
</reference>
<reference key="2">
    <citation type="journal article" date="2003" name="Microbiol. Mol. Biol. Rev.">
        <title>Bacteriophage T4 genome.</title>
        <authorList>
            <person name="Miller E.S."/>
            <person name="Kutter E."/>
            <person name="Mosig G."/>
            <person name="Arisaka F."/>
            <person name="Kunisawa T."/>
            <person name="Ruger W."/>
        </authorList>
    </citation>
    <scope>NUCLEOTIDE SEQUENCE [LARGE SCALE GENOMIC DNA]</scope>
</reference>
<name>Y07B_BPT4</name>
<proteinExistence type="predicted"/>
<feature type="chain" id="PRO_0000165151" description="Uncharacterized 11.2 kDa protein in segB-ipI intergenic region">
    <location>
        <begin position="1"/>
        <end position="95"/>
    </location>
</feature>
<protein>
    <recommendedName>
        <fullName>Uncharacterized 11.2 kDa protein in segB-ipI intergenic region</fullName>
    </recommendedName>
    <alternativeName>
        <fullName>ORF4</fullName>
    </alternativeName>
</protein>